<protein>
    <recommendedName>
        <fullName>Putative biopolymer transport protein ExbB-like 2</fullName>
    </recommendedName>
</protein>
<proteinExistence type="inferred from homology"/>
<gene>
    <name type="ordered locus">jhp_1338</name>
</gene>
<feature type="chain" id="PRO_0000145818" description="Putative biopolymer transport protein ExbB-like 2">
    <location>
        <begin position="1"/>
        <end position="150"/>
    </location>
</feature>
<feature type="transmembrane region" description="Helical" evidence="1">
    <location>
        <begin position="5"/>
        <end position="25"/>
    </location>
</feature>
<feature type="transmembrane region" description="Helical" evidence="1">
    <location>
        <begin position="63"/>
        <end position="83"/>
    </location>
</feature>
<feature type="transmembrane region" description="Helical" evidence="1">
    <location>
        <begin position="97"/>
        <end position="117"/>
    </location>
</feature>
<comment type="subcellular location">
    <subcellularLocation>
        <location evidence="2">Cell inner membrane</location>
        <topology evidence="2">Multi-pass membrane protein</topology>
    </subcellularLocation>
</comment>
<comment type="similarity">
    <text evidence="2">Belongs to the ExbB/TolQ family.</text>
</comment>
<sequence length="150" mass="16624">MKEMVDYGIIGFLIFLSVIVIAIAIERLWFFATLRVDDYTDRRKLELALHKRLTLVATIGSNAPYIGLLGTVMGIMLTFMDLGSASGIDTKAIMTNLALALKATGMGLLVAIPAIVIYNLLVRKSEILVTKWDIFHHPVDTQSHEVYSKA</sequence>
<dbReference type="EMBL" id="AE001439">
    <property type="protein sequence ID" value="AAD06914.1"/>
    <property type="molecule type" value="Genomic_DNA"/>
</dbReference>
<dbReference type="PIR" id="H71820">
    <property type="entry name" value="H71820"/>
</dbReference>
<dbReference type="SMR" id="Q9ZJH1"/>
<dbReference type="KEGG" id="hpj:jhp_1338"/>
<dbReference type="PATRIC" id="fig|85963.30.peg.1215"/>
<dbReference type="eggNOG" id="COG0811">
    <property type="taxonomic scope" value="Bacteria"/>
</dbReference>
<dbReference type="Proteomes" id="UP000000804">
    <property type="component" value="Chromosome"/>
</dbReference>
<dbReference type="GO" id="GO:0005886">
    <property type="term" value="C:plasma membrane"/>
    <property type="evidence" value="ECO:0007669"/>
    <property type="project" value="UniProtKB-SubCell"/>
</dbReference>
<dbReference type="GO" id="GO:0017038">
    <property type="term" value="P:protein import"/>
    <property type="evidence" value="ECO:0007669"/>
    <property type="project" value="TreeGrafter"/>
</dbReference>
<dbReference type="GO" id="GO:0055085">
    <property type="term" value="P:transmembrane transport"/>
    <property type="evidence" value="ECO:0007669"/>
    <property type="project" value="InterPro"/>
</dbReference>
<dbReference type="InterPro" id="IPR050790">
    <property type="entry name" value="ExbB/TolQ_transport"/>
</dbReference>
<dbReference type="InterPro" id="IPR002898">
    <property type="entry name" value="MotA_ExbB_proton_chnl"/>
</dbReference>
<dbReference type="InterPro" id="IPR014172">
    <property type="entry name" value="TonB_ExbB_2"/>
</dbReference>
<dbReference type="NCBIfam" id="TIGR02805">
    <property type="entry name" value="exbB2"/>
    <property type="match status" value="1"/>
</dbReference>
<dbReference type="PANTHER" id="PTHR30625:SF15">
    <property type="entry name" value="BIOPOLYMER TRANSPORT PROTEIN EXBB"/>
    <property type="match status" value="1"/>
</dbReference>
<dbReference type="PANTHER" id="PTHR30625">
    <property type="entry name" value="PROTEIN TOLQ"/>
    <property type="match status" value="1"/>
</dbReference>
<dbReference type="Pfam" id="PF01618">
    <property type="entry name" value="MotA_ExbB"/>
    <property type="match status" value="1"/>
</dbReference>
<accession>Q9ZJH1</accession>
<keyword id="KW-0997">Cell inner membrane</keyword>
<keyword id="KW-1003">Cell membrane</keyword>
<keyword id="KW-0472">Membrane</keyword>
<keyword id="KW-0653">Protein transport</keyword>
<keyword id="KW-0812">Transmembrane</keyword>
<keyword id="KW-1133">Transmembrane helix</keyword>
<keyword id="KW-0813">Transport</keyword>
<reference key="1">
    <citation type="journal article" date="1999" name="Nature">
        <title>Genomic sequence comparison of two unrelated isolates of the human gastric pathogen Helicobacter pylori.</title>
        <authorList>
            <person name="Alm R.A."/>
            <person name="Ling L.-S.L."/>
            <person name="Moir D.T."/>
            <person name="King B.L."/>
            <person name="Brown E.D."/>
            <person name="Doig P.C."/>
            <person name="Smith D.R."/>
            <person name="Noonan B."/>
            <person name="Guild B.C."/>
            <person name="deJonge B.L."/>
            <person name="Carmel G."/>
            <person name="Tummino P.J."/>
            <person name="Caruso A."/>
            <person name="Uria-Nickelsen M."/>
            <person name="Mills D.M."/>
            <person name="Ives C."/>
            <person name="Gibson R."/>
            <person name="Merberg D."/>
            <person name="Mills S.D."/>
            <person name="Jiang Q."/>
            <person name="Taylor D.E."/>
            <person name="Vovis G.F."/>
            <person name="Trust T.J."/>
        </authorList>
    </citation>
    <scope>NUCLEOTIDE SEQUENCE [LARGE SCALE GENOMIC DNA]</scope>
    <source>
        <strain>J99 / ATCC 700824</strain>
    </source>
</reference>
<evidence type="ECO:0000255" key="1"/>
<evidence type="ECO:0000305" key="2"/>
<name>EXBL2_HELPJ</name>
<organism>
    <name type="scientific">Helicobacter pylori (strain J99 / ATCC 700824)</name>
    <name type="common">Campylobacter pylori J99</name>
    <dbReference type="NCBI Taxonomy" id="85963"/>
    <lineage>
        <taxon>Bacteria</taxon>
        <taxon>Pseudomonadati</taxon>
        <taxon>Campylobacterota</taxon>
        <taxon>Epsilonproteobacteria</taxon>
        <taxon>Campylobacterales</taxon>
        <taxon>Helicobacteraceae</taxon>
        <taxon>Helicobacter</taxon>
    </lineage>
</organism>